<accession>Q7MAR9</accession>
<dbReference type="EC" id="3.1.-.-" evidence="1"/>
<dbReference type="EMBL" id="BX571657">
    <property type="protein sequence ID" value="CAE09240.1"/>
    <property type="status" value="ALT_INIT"/>
    <property type="molecule type" value="Genomic_DNA"/>
</dbReference>
<dbReference type="RefSeq" id="WP_041571662.1">
    <property type="nucleotide sequence ID" value="NC_005090.1"/>
</dbReference>
<dbReference type="SMR" id="Q7MAR9"/>
<dbReference type="STRING" id="273121.WS0071"/>
<dbReference type="KEGG" id="wsu:WS0071"/>
<dbReference type="eggNOG" id="COG1418">
    <property type="taxonomic scope" value="Bacteria"/>
</dbReference>
<dbReference type="HOGENOM" id="CLU_028328_1_0_7"/>
<dbReference type="Proteomes" id="UP000000422">
    <property type="component" value="Chromosome"/>
</dbReference>
<dbReference type="GO" id="GO:0005886">
    <property type="term" value="C:plasma membrane"/>
    <property type="evidence" value="ECO:0007669"/>
    <property type="project" value="UniProtKB-SubCell"/>
</dbReference>
<dbReference type="GO" id="GO:0003723">
    <property type="term" value="F:RNA binding"/>
    <property type="evidence" value="ECO:0007669"/>
    <property type="project" value="UniProtKB-UniRule"/>
</dbReference>
<dbReference type="GO" id="GO:0004521">
    <property type="term" value="F:RNA endonuclease activity"/>
    <property type="evidence" value="ECO:0007669"/>
    <property type="project" value="UniProtKB-UniRule"/>
</dbReference>
<dbReference type="GO" id="GO:0006402">
    <property type="term" value="P:mRNA catabolic process"/>
    <property type="evidence" value="ECO:0007669"/>
    <property type="project" value="UniProtKB-UniRule"/>
</dbReference>
<dbReference type="CDD" id="cd00077">
    <property type="entry name" value="HDc"/>
    <property type="match status" value="1"/>
</dbReference>
<dbReference type="CDD" id="cd22431">
    <property type="entry name" value="KH-I_RNaseY"/>
    <property type="match status" value="1"/>
</dbReference>
<dbReference type="Gene3D" id="1.10.3210.10">
    <property type="entry name" value="Hypothetical protein af1432"/>
    <property type="match status" value="1"/>
</dbReference>
<dbReference type="Gene3D" id="3.30.1370.10">
    <property type="entry name" value="K Homology domain, type 1"/>
    <property type="match status" value="1"/>
</dbReference>
<dbReference type="HAMAP" id="MF_00335">
    <property type="entry name" value="RNase_Y"/>
    <property type="match status" value="1"/>
</dbReference>
<dbReference type="InterPro" id="IPR003607">
    <property type="entry name" value="HD/PDEase_dom"/>
</dbReference>
<dbReference type="InterPro" id="IPR006674">
    <property type="entry name" value="HD_domain"/>
</dbReference>
<dbReference type="InterPro" id="IPR006675">
    <property type="entry name" value="HDIG_dom"/>
</dbReference>
<dbReference type="InterPro" id="IPR004087">
    <property type="entry name" value="KH_dom"/>
</dbReference>
<dbReference type="InterPro" id="IPR004088">
    <property type="entry name" value="KH_dom_type_1"/>
</dbReference>
<dbReference type="InterPro" id="IPR036612">
    <property type="entry name" value="KH_dom_type_1_sf"/>
</dbReference>
<dbReference type="InterPro" id="IPR017705">
    <property type="entry name" value="Ribonuclease_Y"/>
</dbReference>
<dbReference type="InterPro" id="IPR022711">
    <property type="entry name" value="RNase_Y_N"/>
</dbReference>
<dbReference type="NCBIfam" id="TIGR00277">
    <property type="entry name" value="HDIG"/>
    <property type="match status" value="1"/>
</dbReference>
<dbReference type="NCBIfam" id="TIGR03319">
    <property type="entry name" value="RNase_Y"/>
    <property type="match status" value="1"/>
</dbReference>
<dbReference type="PANTHER" id="PTHR12826">
    <property type="entry name" value="RIBONUCLEASE Y"/>
    <property type="match status" value="1"/>
</dbReference>
<dbReference type="PANTHER" id="PTHR12826:SF15">
    <property type="entry name" value="RIBONUCLEASE Y"/>
    <property type="match status" value="1"/>
</dbReference>
<dbReference type="Pfam" id="PF01966">
    <property type="entry name" value="HD"/>
    <property type="match status" value="1"/>
</dbReference>
<dbReference type="Pfam" id="PF00013">
    <property type="entry name" value="KH_1"/>
    <property type="match status" value="1"/>
</dbReference>
<dbReference type="Pfam" id="PF12072">
    <property type="entry name" value="RNase_Y_N"/>
    <property type="match status" value="1"/>
</dbReference>
<dbReference type="SMART" id="SM00471">
    <property type="entry name" value="HDc"/>
    <property type="match status" value="1"/>
</dbReference>
<dbReference type="SMART" id="SM00322">
    <property type="entry name" value="KH"/>
    <property type="match status" value="1"/>
</dbReference>
<dbReference type="SUPFAM" id="SSF54791">
    <property type="entry name" value="Eukaryotic type KH-domain (KH-domain type I)"/>
    <property type="match status" value="1"/>
</dbReference>
<dbReference type="SUPFAM" id="SSF109604">
    <property type="entry name" value="HD-domain/PDEase-like"/>
    <property type="match status" value="1"/>
</dbReference>
<dbReference type="PROSITE" id="PS51831">
    <property type="entry name" value="HD"/>
    <property type="match status" value="1"/>
</dbReference>
<dbReference type="PROSITE" id="PS50084">
    <property type="entry name" value="KH_TYPE_1"/>
    <property type="match status" value="1"/>
</dbReference>
<gene>
    <name evidence="1" type="primary">rny</name>
    <name type="ordered locus">WS0071</name>
</gene>
<evidence type="ECO:0000255" key="1">
    <source>
        <dbReference type="HAMAP-Rule" id="MF_00335"/>
    </source>
</evidence>
<evidence type="ECO:0000255" key="2">
    <source>
        <dbReference type="PROSITE-ProRule" id="PRU01175"/>
    </source>
</evidence>
<evidence type="ECO:0000305" key="3"/>
<sequence length="523" mass="58368">MIEWTILSSLASALLAGGGTYLVYKKVSNANYKIHLEKAKARARAIEHEAEMILQEAKIRAKELEIGAKSKYENETSKVIKEYESYLIKLEKQEAKNQQRLERETQQLEEERRRINHKQASLSGMIEELEKLKGDYRSKLTESLEILSRVAGLTQEEAKELALAKATEESRAQIAQIVRKYESEAKEEGRKRANYILAQATTRFAGEFAAERLINVVNLPNDELKGRIIGKEGRNIKTLEMLSGVDVIIDDTPGAIVLSSFNLYRRAIATRTIEALVEDGRIQPARIEEVYKKVEQEFEEKVLEEGEGIVLDMELGYVHPELKKLIGRLKYRASYGQNALGHSLEVANLAGVIAGELGGDVKLAKRAGLLHDIGKALTHDFGGSHVDLGAEVCSRYKEHPVVINAIFAHHGHEEAKSIESAAVCAADALSAARPGARREVLESFLKRVQEIEKIAMEKLGVRQAYAINAGREVRVIVNADLINDEESVLLAQEIAKEIETKVQYPGEIKVSVIREVRAVEFAK</sequence>
<feature type="chain" id="PRO_0000344973" description="Ribonuclease Y">
    <location>
        <begin position="1"/>
        <end position="523"/>
    </location>
</feature>
<feature type="transmembrane region" description="Helical" evidence="1">
    <location>
        <begin position="7"/>
        <end position="24"/>
    </location>
</feature>
<feature type="domain" description="KH" evidence="1">
    <location>
        <begin position="213"/>
        <end position="279"/>
    </location>
</feature>
<feature type="domain" description="HD" evidence="2">
    <location>
        <begin position="339"/>
        <end position="432"/>
    </location>
</feature>
<reference key="1">
    <citation type="journal article" date="2003" name="Proc. Natl. Acad. Sci. U.S.A.">
        <title>Complete genome sequence and analysis of Wolinella succinogenes.</title>
        <authorList>
            <person name="Baar C."/>
            <person name="Eppinger M."/>
            <person name="Raddatz G."/>
            <person name="Simon J."/>
            <person name="Lanz C."/>
            <person name="Klimmek O."/>
            <person name="Nandakumar R."/>
            <person name="Gross R."/>
            <person name="Rosinus A."/>
            <person name="Keller H."/>
            <person name="Jagtap P."/>
            <person name="Linke B."/>
            <person name="Meyer F."/>
            <person name="Lederer H."/>
            <person name="Schuster S.C."/>
        </authorList>
    </citation>
    <scope>NUCLEOTIDE SEQUENCE [LARGE SCALE GENOMIC DNA]</scope>
    <source>
        <strain>ATCC 29543 / DSM 1740 / CCUG 13145 / JCM 31913 / LMG 7466 / NCTC 11488 / FDC 602W</strain>
    </source>
</reference>
<keyword id="KW-1003">Cell membrane</keyword>
<keyword id="KW-0255">Endonuclease</keyword>
<keyword id="KW-0378">Hydrolase</keyword>
<keyword id="KW-0472">Membrane</keyword>
<keyword id="KW-0540">Nuclease</keyword>
<keyword id="KW-1185">Reference proteome</keyword>
<keyword id="KW-0694">RNA-binding</keyword>
<keyword id="KW-0812">Transmembrane</keyword>
<keyword id="KW-1133">Transmembrane helix</keyword>
<organism>
    <name type="scientific">Wolinella succinogenes (strain ATCC 29543 / DSM 1740 / CCUG 13145 / JCM 31913 / LMG 7466 / NCTC 11488 / FDC 602W)</name>
    <name type="common">Vibrio succinogenes</name>
    <dbReference type="NCBI Taxonomy" id="273121"/>
    <lineage>
        <taxon>Bacteria</taxon>
        <taxon>Pseudomonadati</taxon>
        <taxon>Campylobacterota</taxon>
        <taxon>Epsilonproteobacteria</taxon>
        <taxon>Campylobacterales</taxon>
        <taxon>Helicobacteraceae</taxon>
        <taxon>Wolinella</taxon>
    </lineage>
</organism>
<name>RNY_WOLSU</name>
<comment type="function">
    <text evidence="1">Endoribonuclease that initiates mRNA decay.</text>
</comment>
<comment type="subcellular location">
    <subcellularLocation>
        <location evidence="1">Cell membrane</location>
        <topology evidence="1">Single-pass membrane protein</topology>
    </subcellularLocation>
</comment>
<comment type="similarity">
    <text evidence="1">Belongs to the RNase Y family.</text>
</comment>
<comment type="sequence caution" evidence="3">
    <conflict type="erroneous initiation">
        <sequence resource="EMBL-CDS" id="CAE09240"/>
    </conflict>
</comment>
<proteinExistence type="inferred from homology"/>
<protein>
    <recommendedName>
        <fullName evidence="1">Ribonuclease Y</fullName>
        <shortName evidence="1">RNase Y</shortName>
        <ecNumber evidence="1">3.1.-.-</ecNumber>
    </recommendedName>
</protein>